<sequence length="122" mass="13487">MSAAVVKPFKIFNDFENKENIDPLTGICSNTKPNIFTSKKRVPLRDITPVTTKYPTSPKKSRQVAVDLASNYIPPVFNLQISSNVPATKKPINNGFNFINGNSNGSFSIYHDVPTSSVKTIR</sequence>
<gene>
    <name type="ORF">DDB_G0288575</name>
</gene>
<feature type="chain" id="PRO_0000346982" description="Putative uncharacterized protein DDB_G0288575">
    <location>
        <begin position="1"/>
        <end position="122"/>
    </location>
</feature>
<proteinExistence type="predicted"/>
<protein>
    <recommendedName>
        <fullName>Putative uncharacterized protein DDB_G0288575</fullName>
    </recommendedName>
</protein>
<accession>Q54IR4</accession>
<organism>
    <name type="scientific">Dictyostelium discoideum</name>
    <name type="common">Social amoeba</name>
    <dbReference type="NCBI Taxonomy" id="44689"/>
    <lineage>
        <taxon>Eukaryota</taxon>
        <taxon>Amoebozoa</taxon>
        <taxon>Evosea</taxon>
        <taxon>Eumycetozoa</taxon>
        <taxon>Dictyostelia</taxon>
        <taxon>Dictyosteliales</taxon>
        <taxon>Dictyosteliaceae</taxon>
        <taxon>Dictyostelium</taxon>
    </lineage>
</organism>
<keyword id="KW-1185">Reference proteome</keyword>
<reference key="1">
    <citation type="journal article" date="2005" name="Nature">
        <title>The genome of the social amoeba Dictyostelium discoideum.</title>
        <authorList>
            <person name="Eichinger L."/>
            <person name="Pachebat J.A."/>
            <person name="Gloeckner G."/>
            <person name="Rajandream M.A."/>
            <person name="Sucgang R."/>
            <person name="Berriman M."/>
            <person name="Song J."/>
            <person name="Olsen R."/>
            <person name="Szafranski K."/>
            <person name="Xu Q."/>
            <person name="Tunggal B."/>
            <person name="Kummerfeld S."/>
            <person name="Madera M."/>
            <person name="Konfortov B.A."/>
            <person name="Rivero F."/>
            <person name="Bankier A.T."/>
            <person name="Lehmann R."/>
            <person name="Hamlin N."/>
            <person name="Davies R."/>
            <person name="Gaudet P."/>
            <person name="Fey P."/>
            <person name="Pilcher K."/>
            <person name="Chen G."/>
            <person name="Saunders D."/>
            <person name="Sodergren E.J."/>
            <person name="Davis P."/>
            <person name="Kerhornou A."/>
            <person name="Nie X."/>
            <person name="Hall N."/>
            <person name="Anjard C."/>
            <person name="Hemphill L."/>
            <person name="Bason N."/>
            <person name="Farbrother P."/>
            <person name="Desany B."/>
            <person name="Just E."/>
            <person name="Morio T."/>
            <person name="Rost R."/>
            <person name="Churcher C.M."/>
            <person name="Cooper J."/>
            <person name="Haydock S."/>
            <person name="van Driessche N."/>
            <person name="Cronin A."/>
            <person name="Goodhead I."/>
            <person name="Muzny D.M."/>
            <person name="Mourier T."/>
            <person name="Pain A."/>
            <person name="Lu M."/>
            <person name="Harper D."/>
            <person name="Lindsay R."/>
            <person name="Hauser H."/>
            <person name="James K.D."/>
            <person name="Quiles M."/>
            <person name="Madan Babu M."/>
            <person name="Saito T."/>
            <person name="Buchrieser C."/>
            <person name="Wardroper A."/>
            <person name="Felder M."/>
            <person name="Thangavelu M."/>
            <person name="Johnson D."/>
            <person name="Knights A."/>
            <person name="Loulseged H."/>
            <person name="Mungall K.L."/>
            <person name="Oliver K."/>
            <person name="Price C."/>
            <person name="Quail M.A."/>
            <person name="Urushihara H."/>
            <person name="Hernandez J."/>
            <person name="Rabbinowitsch E."/>
            <person name="Steffen D."/>
            <person name="Sanders M."/>
            <person name="Ma J."/>
            <person name="Kohara Y."/>
            <person name="Sharp S."/>
            <person name="Simmonds M.N."/>
            <person name="Spiegler S."/>
            <person name="Tivey A."/>
            <person name="Sugano S."/>
            <person name="White B."/>
            <person name="Walker D."/>
            <person name="Woodward J.R."/>
            <person name="Winckler T."/>
            <person name="Tanaka Y."/>
            <person name="Shaulsky G."/>
            <person name="Schleicher M."/>
            <person name="Weinstock G.M."/>
            <person name="Rosenthal A."/>
            <person name="Cox E.C."/>
            <person name="Chisholm R.L."/>
            <person name="Gibbs R.A."/>
            <person name="Loomis W.F."/>
            <person name="Platzer M."/>
            <person name="Kay R.R."/>
            <person name="Williams J.G."/>
            <person name="Dear P.H."/>
            <person name="Noegel A.A."/>
            <person name="Barrell B.G."/>
            <person name="Kuspa A."/>
        </authorList>
    </citation>
    <scope>NUCLEOTIDE SEQUENCE [LARGE SCALE GENOMIC DNA]</scope>
    <source>
        <strain>AX4</strain>
    </source>
</reference>
<dbReference type="EMBL" id="AAFI02000117">
    <property type="protein sequence ID" value="EAL63147.1"/>
    <property type="molecule type" value="Genomic_DNA"/>
</dbReference>
<dbReference type="RefSeq" id="XP_636650.1">
    <property type="nucleotide sequence ID" value="XM_631558.1"/>
</dbReference>
<dbReference type="FunCoup" id="Q54IR4">
    <property type="interactions" value="435"/>
</dbReference>
<dbReference type="PaxDb" id="44689-DDB0188000"/>
<dbReference type="EnsemblProtists" id="EAL63147">
    <property type="protein sequence ID" value="EAL63147"/>
    <property type="gene ID" value="DDB_G0288575"/>
</dbReference>
<dbReference type="GeneID" id="8626696"/>
<dbReference type="KEGG" id="ddi:DDB_G0288575"/>
<dbReference type="dictyBase" id="DDB_G0288575"/>
<dbReference type="VEuPathDB" id="AmoebaDB:DDB_G0288575"/>
<dbReference type="eggNOG" id="ENOG502RIGU">
    <property type="taxonomic scope" value="Eukaryota"/>
</dbReference>
<dbReference type="HOGENOM" id="CLU_2031042_0_0_1"/>
<dbReference type="InParanoid" id="Q54IR4"/>
<dbReference type="PRO" id="PR:Q54IR4"/>
<dbReference type="Proteomes" id="UP000002195">
    <property type="component" value="Chromosome 5"/>
</dbReference>
<name>Y8000_DICDI</name>